<sequence>MSIFTPTNQIRLTNVAVVRMKRGGKRFEIACYKNKVVGWRSGVEKDLDEVLQTHSVFVNVSKGQVAKKEDLISAFGTDDQTEICKQILTKGEVQVSDKERHTQLEQMFRDIATIVADKCVNPETKRPYTVILIERAMKDIHYSVKPNKSTKQQALEVIKQLKEKMKIERAHMRLRFILPVNEGKKLKEKLKPLMKVVESEDYSQQLEIVCLIDPGCFREIDELIKKETKGRGSLEVLSLKDVEEGDEKFE</sequence>
<accession>P70122</accession>
<accession>Q3TG78</accession>
<accession>Q9CR18</accession>
<dbReference type="EMBL" id="AK005079">
    <property type="protein sequence ID" value="BAB23803.1"/>
    <property type="molecule type" value="mRNA"/>
</dbReference>
<dbReference type="EMBL" id="AK014648">
    <property type="protein sequence ID" value="BAB29487.1"/>
    <property type="molecule type" value="mRNA"/>
</dbReference>
<dbReference type="EMBL" id="AK019228">
    <property type="protein sequence ID" value="BAB31612.1"/>
    <property type="molecule type" value="mRNA"/>
</dbReference>
<dbReference type="EMBL" id="AK168847">
    <property type="protein sequence ID" value="BAE40670.1"/>
    <property type="molecule type" value="mRNA"/>
</dbReference>
<dbReference type="EMBL" id="BC003849">
    <property type="protein sequence ID" value="AAH03849.1"/>
    <property type="molecule type" value="mRNA"/>
</dbReference>
<dbReference type="EMBL" id="X99668">
    <property type="protein sequence ID" value="CAA67982.1"/>
    <property type="status" value="ALT_SEQ"/>
    <property type="molecule type" value="mRNA"/>
</dbReference>
<dbReference type="CCDS" id="CCDS19710.1"/>
<dbReference type="RefSeq" id="NP_075737.1">
    <property type="nucleotide sequence ID" value="NM_023248.2"/>
</dbReference>
<dbReference type="BMRB" id="P70122"/>
<dbReference type="SMR" id="P70122"/>
<dbReference type="BioGRID" id="211663">
    <property type="interactions" value="6"/>
</dbReference>
<dbReference type="FunCoup" id="P70122">
    <property type="interactions" value="3669"/>
</dbReference>
<dbReference type="IntAct" id="P70122">
    <property type="interactions" value="1"/>
</dbReference>
<dbReference type="MINT" id="P70122"/>
<dbReference type="STRING" id="10090.ENSMUSP00000026387"/>
<dbReference type="iPTMnet" id="P70122"/>
<dbReference type="PhosphoSitePlus" id="P70122"/>
<dbReference type="SwissPalm" id="P70122"/>
<dbReference type="jPOST" id="P70122"/>
<dbReference type="PaxDb" id="10090-ENSMUSP00000026387"/>
<dbReference type="PeptideAtlas" id="P70122"/>
<dbReference type="ProteomicsDB" id="256709"/>
<dbReference type="Pumba" id="P70122"/>
<dbReference type="Antibodypedia" id="14141">
    <property type="antibodies" value="237 antibodies from 32 providers"/>
</dbReference>
<dbReference type="DNASU" id="66711"/>
<dbReference type="Ensembl" id="ENSMUST00000026387.11">
    <property type="protein sequence ID" value="ENSMUSP00000026387.5"/>
    <property type="gene ID" value="ENSMUSG00000025337.11"/>
</dbReference>
<dbReference type="GeneID" id="66711"/>
<dbReference type="KEGG" id="mmu:66711"/>
<dbReference type="UCSC" id="uc008zuj.1">
    <property type="organism name" value="mouse"/>
</dbReference>
<dbReference type="AGR" id="MGI:1913961"/>
<dbReference type="CTD" id="51119"/>
<dbReference type="MGI" id="MGI:1913961">
    <property type="gene designation" value="Sbds"/>
</dbReference>
<dbReference type="VEuPathDB" id="HostDB:ENSMUSG00000025337"/>
<dbReference type="eggNOG" id="KOG2917">
    <property type="taxonomic scope" value="Eukaryota"/>
</dbReference>
<dbReference type="GeneTree" id="ENSGT00390000008135"/>
<dbReference type="HOGENOM" id="CLU_043216_1_1_1"/>
<dbReference type="InParanoid" id="P70122"/>
<dbReference type="OMA" id="AVNPQMD"/>
<dbReference type="OrthoDB" id="10253092at2759"/>
<dbReference type="PhylomeDB" id="P70122"/>
<dbReference type="TreeFam" id="TF300881"/>
<dbReference type="BioGRID-ORCS" id="66711">
    <property type="hits" value="25 hits in 78 CRISPR screens"/>
</dbReference>
<dbReference type="ChiTaRS" id="Sbds">
    <property type="organism name" value="mouse"/>
</dbReference>
<dbReference type="PRO" id="PR:P70122"/>
<dbReference type="Proteomes" id="UP000000589">
    <property type="component" value="Chromosome 5"/>
</dbReference>
<dbReference type="RNAct" id="P70122">
    <property type="molecule type" value="protein"/>
</dbReference>
<dbReference type="Bgee" id="ENSMUSG00000025337">
    <property type="expression patterns" value="Expressed in undifferentiated genital tubercle and 261 other cell types or tissues"/>
</dbReference>
<dbReference type="ExpressionAtlas" id="P70122">
    <property type="expression patterns" value="baseline and differential"/>
</dbReference>
<dbReference type="GO" id="GO:0005829">
    <property type="term" value="C:cytosol"/>
    <property type="evidence" value="ECO:0007669"/>
    <property type="project" value="Ensembl"/>
</dbReference>
<dbReference type="GO" id="GO:0005730">
    <property type="term" value="C:nucleolus"/>
    <property type="evidence" value="ECO:0007669"/>
    <property type="project" value="UniProtKB-SubCell"/>
</dbReference>
<dbReference type="GO" id="GO:0005654">
    <property type="term" value="C:nucleoplasm"/>
    <property type="evidence" value="ECO:0007669"/>
    <property type="project" value="UniProtKB-SubCell"/>
</dbReference>
<dbReference type="GO" id="GO:0000922">
    <property type="term" value="C:spindle pole"/>
    <property type="evidence" value="ECO:0000250"/>
    <property type="project" value="UniProtKB"/>
</dbReference>
<dbReference type="GO" id="GO:0008017">
    <property type="term" value="F:microtubule binding"/>
    <property type="evidence" value="ECO:0007669"/>
    <property type="project" value="Ensembl"/>
</dbReference>
<dbReference type="GO" id="GO:0043022">
    <property type="term" value="F:ribosome binding"/>
    <property type="evidence" value="ECO:0000250"/>
    <property type="project" value="UniProtKB"/>
</dbReference>
<dbReference type="GO" id="GO:0019843">
    <property type="term" value="F:rRNA binding"/>
    <property type="evidence" value="ECO:0007669"/>
    <property type="project" value="Ensembl"/>
</dbReference>
<dbReference type="GO" id="GO:0048539">
    <property type="term" value="P:bone marrow development"/>
    <property type="evidence" value="ECO:0007669"/>
    <property type="project" value="Ensembl"/>
</dbReference>
<dbReference type="GO" id="GO:0030282">
    <property type="term" value="P:bone mineralization"/>
    <property type="evidence" value="ECO:0007669"/>
    <property type="project" value="Ensembl"/>
</dbReference>
<dbReference type="GO" id="GO:0042256">
    <property type="term" value="P:cytosolic ribosome assembly"/>
    <property type="evidence" value="ECO:0000250"/>
    <property type="project" value="UniProtKB"/>
</dbReference>
<dbReference type="GO" id="GO:0002244">
    <property type="term" value="P:hematopoietic progenitor cell differentiation"/>
    <property type="evidence" value="ECO:0000250"/>
    <property type="project" value="UniProtKB"/>
</dbReference>
<dbReference type="GO" id="GO:0001833">
    <property type="term" value="P:inner cell mass cell proliferation"/>
    <property type="evidence" value="ECO:0000315"/>
    <property type="project" value="MGI"/>
</dbReference>
<dbReference type="GO" id="GO:0030595">
    <property type="term" value="P:leukocyte chemotaxis"/>
    <property type="evidence" value="ECO:0007669"/>
    <property type="project" value="Ensembl"/>
</dbReference>
<dbReference type="GO" id="GO:0007052">
    <property type="term" value="P:mitotic spindle organization"/>
    <property type="evidence" value="ECO:0007669"/>
    <property type="project" value="Ensembl"/>
</dbReference>
<dbReference type="GO" id="GO:0006364">
    <property type="term" value="P:rRNA processing"/>
    <property type="evidence" value="ECO:0007669"/>
    <property type="project" value="Ensembl"/>
</dbReference>
<dbReference type="FunFam" id="3.30.70.240:FF:000009">
    <property type="entry name" value="SBDS ribosome maturation factor"/>
    <property type="match status" value="1"/>
</dbReference>
<dbReference type="FunFam" id="1.10.10.900:FF:000001">
    <property type="entry name" value="SBDS, ribosome maturation factor"/>
    <property type="match status" value="1"/>
</dbReference>
<dbReference type="FunFam" id="3.30.1250.10:FF:000001">
    <property type="entry name" value="SBDS, ribosome maturation factor"/>
    <property type="match status" value="1"/>
</dbReference>
<dbReference type="Gene3D" id="3.30.70.240">
    <property type="match status" value="1"/>
</dbReference>
<dbReference type="Gene3D" id="3.30.1250.10">
    <property type="entry name" value="Ribosome maturation protein SBDS, N-terminal domain"/>
    <property type="match status" value="1"/>
</dbReference>
<dbReference type="Gene3D" id="1.10.10.900">
    <property type="entry name" value="SBDS protein C-terminal domain, subdomain 1"/>
    <property type="match status" value="1"/>
</dbReference>
<dbReference type="InterPro" id="IPR018023">
    <property type="entry name" value="Ribosome_mat_SBDS_CS"/>
</dbReference>
<dbReference type="InterPro" id="IPR036786">
    <property type="entry name" value="Ribosome_mat_SBDS_N_sf"/>
</dbReference>
<dbReference type="InterPro" id="IPR002140">
    <property type="entry name" value="Sdo1/SBDS"/>
</dbReference>
<dbReference type="InterPro" id="IPR039100">
    <property type="entry name" value="Sdo1/SBDS-like"/>
</dbReference>
<dbReference type="InterPro" id="IPR046928">
    <property type="entry name" value="SDO1/SBDS_C"/>
</dbReference>
<dbReference type="InterPro" id="IPR018978">
    <property type="entry name" value="SDO1/SBDS_central"/>
</dbReference>
<dbReference type="InterPro" id="IPR037188">
    <property type="entry name" value="Sdo1/SBDS_central_sf"/>
</dbReference>
<dbReference type="InterPro" id="IPR019783">
    <property type="entry name" value="SDO1/SBDS_N"/>
</dbReference>
<dbReference type="NCBIfam" id="TIGR00291">
    <property type="entry name" value="RNA_SBDS"/>
    <property type="match status" value="1"/>
</dbReference>
<dbReference type="PANTHER" id="PTHR10927">
    <property type="entry name" value="RIBOSOME MATURATION PROTEIN SBDS"/>
    <property type="match status" value="1"/>
</dbReference>
<dbReference type="PANTHER" id="PTHR10927:SF6">
    <property type="entry name" value="RIBOSOME MATURATION PROTEIN SBDS"/>
    <property type="match status" value="1"/>
</dbReference>
<dbReference type="Pfam" id="PF20268">
    <property type="entry name" value="SBDS_C"/>
    <property type="match status" value="1"/>
</dbReference>
<dbReference type="Pfam" id="PF09377">
    <property type="entry name" value="SBDS_domain_II"/>
    <property type="match status" value="1"/>
</dbReference>
<dbReference type="Pfam" id="PF01172">
    <property type="entry name" value="SBDS_N"/>
    <property type="match status" value="1"/>
</dbReference>
<dbReference type="SUPFAM" id="SSF89895">
    <property type="entry name" value="FYSH domain"/>
    <property type="match status" value="1"/>
</dbReference>
<dbReference type="SUPFAM" id="SSF109728">
    <property type="entry name" value="Hypothetical protein AF0491, middle domain"/>
    <property type="match status" value="1"/>
</dbReference>
<dbReference type="PROSITE" id="PS01267">
    <property type="entry name" value="UPF0023"/>
    <property type="match status" value="1"/>
</dbReference>
<proteinExistence type="evidence at protein level"/>
<gene>
    <name type="primary">Sbds</name>
</gene>
<evidence type="ECO:0000250" key="1"/>
<evidence type="ECO:0000250" key="2">
    <source>
        <dbReference type="UniProtKB" id="Q9Y3A5"/>
    </source>
</evidence>
<evidence type="ECO:0000269" key="3">
    <source>
    </source>
</evidence>
<evidence type="ECO:0000269" key="4">
    <source>
    </source>
</evidence>
<evidence type="ECO:0000269" key="5">
    <source>
    </source>
</evidence>
<evidence type="ECO:0000305" key="6"/>
<evidence type="ECO:0007744" key="7">
    <source>
    </source>
</evidence>
<keyword id="KW-0007">Acetylation</keyword>
<keyword id="KW-0963">Cytoplasm</keyword>
<keyword id="KW-0206">Cytoskeleton</keyword>
<keyword id="KW-0539">Nucleus</keyword>
<keyword id="KW-0597">Phosphoprotein</keyword>
<keyword id="KW-1185">Reference proteome</keyword>
<keyword id="KW-0690">Ribosome biogenesis</keyword>
<organism>
    <name type="scientific">Mus musculus</name>
    <name type="common">Mouse</name>
    <dbReference type="NCBI Taxonomy" id="10090"/>
    <lineage>
        <taxon>Eukaryota</taxon>
        <taxon>Metazoa</taxon>
        <taxon>Chordata</taxon>
        <taxon>Craniata</taxon>
        <taxon>Vertebrata</taxon>
        <taxon>Euteleostomi</taxon>
        <taxon>Mammalia</taxon>
        <taxon>Eutheria</taxon>
        <taxon>Euarchontoglires</taxon>
        <taxon>Glires</taxon>
        <taxon>Rodentia</taxon>
        <taxon>Myomorpha</taxon>
        <taxon>Muroidea</taxon>
        <taxon>Muridae</taxon>
        <taxon>Murinae</taxon>
        <taxon>Mus</taxon>
        <taxon>Mus</taxon>
    </lineage>
</organism>
<comment type="function">
    <text evidence="1 4 5">Required for the assembly of mature ribosomes and ribosome biogenesis. Together with EFL1, triggers the GTP-dependent release of EIF6 from 60S pre-ribosomes in the cytoplasm, thereby activating ribosomes for translation competence by allowing 80S ribosome assembly and facilitating EIF6 recycling to the nucleus, where it is required for 60S rRNA processing and nuclear export. Required for normal levels of protein synthesis. May play a role in cellular stress resistance. May play a role in cellular response to DNA damage. May play a role in cell proliferation (By similarity).</text>
</comment>
<comment type="subunit">
    <text evidence="2">Associates with the 60S ribosomal subunit. Interacts with NPM1, RPA1 and PRKDC. May interact with NIP7. Found in a complex consisting of the 60S ribosomal subunit, SBDS and EFL1. Interacts with CLN3 (By similarity).</text>
</comment>
<comment type="subcellular location">
    <subcellularLocation>
        <location>Cytoplasm</location>
    </subcellularLocation>
    <subcellularLocation>
        <location evidence="1">Nucleus</location>
        <location evidence="1">Nucleolus</location>
    </subcellularLocation>
    <subcellularLocation>
        <location>Nucleus</location>
        <location>Nucleoplasm</location>
    </subcellularLocation>
    <subcellularLocation>
        <location evidence="1">Cytoplasm</location>
        <location evidence="1">Cytoskeleton</location>
        <location evidence="1">Spindle</location>
    </subcellularLocation>
    <text evidence="1 4 5">Detected in the cytoplasm, but not in the nucleus (PubMed:21536732). Primarily detected in the cytoplasm, and at low levels in nucleus (PubMed:19602484). Detected in the nucleolus during G1 and G2 phase of the cell cycle, and diffusely distributed in the nucleus during S phase. Detected at the mitotic spindle. Colocalizes with the microtubule organizing center during interphase (By similarity).</text>
</comment>
<comment type="tissue specificity">
    <text evidence="3">Detected in adult liver, brain, heart, spleen, pancreas, kidney, lung and testis (at protein level). Detected in heart, brain, lung, liver, kidney and testis.</text>
</comment>
<comment type="disruption phenotype">
    <text evidence="3 5">Embryonic lethality. Embryos cease to develop prior to 6.5 dpc. Reduced assembly of 60S ribosomes and accumulation of halfmer ribosomes.</text>
</comment>
<comment type="similarity">
    <text evidence="6">Belongs to the SDO1/SBDS family.</text>
</comment>
<name>SBDS_MOUSE</name>
<protein>
    <recommendedName>
        <fullName>Ribosome maturation protein SBDS</fullName>
    </recommendedName>
    <alternativeName>
        <fullName>Protein 22A3</fullName>
    </alternativeName>
    <alternativeName>
        <fullName>Shwachman-Bodian-Diamond syndrome protein homolog</fullName>
    </alternativeName>
</protein>
<reference key="1">
    <citation type="journal article" date="2005" name="Science">
        <title>The transcriptional landscape of the mammalian genome.</title>
        <authorList>
            <person name="Carninci P."/>
            <person name="Kasukawa T."/>
            <person name="Katayama S."/>
            <person name="Gough J."/>
            <person name="Frith M.C."/>
            <person name="Maeda N."/>
            <person name="Oyama R."/>
            <person name="Ravasi T."/>
            <person name="Lenhard B."/>
            <person name="Wells C."/>
            <person name="Kodzius R."/>
            <person name="Shimokawa K."/>
            <person name="Bajic V.B."/>
            <person name="Brenner S.E."/>
            <person name="Batalov S."/>
            <person name="Forrest A.R."/>
            <person name="Zavolan M."/>
            <person name="Davis M.J."/>
            <person name="Wilming L.G."/>
            <person name="Aidinis V."/>
            <person name="Allen J.E."/>
            <person name="Ambesi-Impiombato A."/>
            <person name="Apweiler R."/>
            <person name="Aturaliya R.N."/>
            <person name="Bailey T.L."/>
            <person name="Bansal M."/>
            <person name="Baxter L."/>
            <person name="Beisel K.W."/>
            <person name="Bersano T."/>
            <person name="Bono H."/>
            <person name="Chalk A.M."/>
            <person name="Chiu K.P."/>
            <person name="Choudhary V."/>
            <person name="Christoffels A."/>
            <person name="Clutterbuck D.R."/>
            <person name="Crowe M.L."/>
            <person name="Dalla E."/>
            <person name="Dalrymple B.P."/>
            <person name="de Bono B."/>
            <person name="Della Gatta G."/>
            <person name="di Bernardo D."/>
            <person name="Down T."/>
            <person name="Engstrom P."/>
            <person name="Fagiolini M."/>
            <person name="Faulkner G."/>
            <person name="Fletcher C.F."/>
            <person name="Fukushima T."/>
            <person name="Furuno M."/>
            <person name="Futaki S."/>
            <person name="Gariboldi M."/>
            <person name="Georgii-Hemming P."/>
            <person name="Gingeras T.R."/>
            <person name="Gojobori T."/>
            <person name="Green R.E."/>
            <person name="Gustincich S."/>
            <person name="Harbers M."/>
            <person name="Hayashi Y."/>
            <person name="Hensch T.K."/>
            <person name="Hirokawa N."/>
            <person name="Hill D."/>
            <person name="Huminiecki L."/>
            <person name="Iacono M."/>
            <person name="Ikeo K."/>
            <person name="Iwama A."/>
            <person name="Ishikawa T."/>
            <person name="Jakt M."/>
            <person name="Kanapin A."/>
            <person name="Katoh M."/>
            <person name="Kawasawa Y."/>
            <person name="Kelso J."/>
            <person name="Kitamura H."/>
            <person name="Kitano H."/>
            <person name="Kollias G."/>
            <person name="Krishnan S.P."/>
            <person name="Kruger A."/>
            <person name="Kummerfeld S.K."/>
            <person name="Kurochkin I.V."/>
            <person name="Lareau L.F."/>
            <person name="Lazarevic D."/>
            <person name="Lipovich L."/>
            <person name="Liu J."/>
            <person name="Liuni S."/>
            <person name="McWilliam S."/>
            <person name="Madan Babu M."/>
            <person name="Madera M."/>
            <person name="Marchionni L."/>
            <person name="Matsuda H."/>
            <person name="Matsuzawa S."/>
            <person name="Miki H."/>
            <person name="Mignone F."/>
            <person name="Miyake S."/>
            <person name="Morris K."/>
            <person name="Mottagui-Tabar S."/>
            <person name="Mulder N."/>
            <person name="Nakano N."/>
            <person name="Nakauchi H."/>
            <person name="Ng P."/>
            <person name="Nilsson R."/>
            <person name="Nishiguchi S."/>
            <person name="Nishikawa S."/>
            <person name="Nori F."/>
            <person name="Ohara O."/>
            <person name="Okazaki Y."/>
            <person name="Orlando V."/>
            <person name="Pang K.C."/>
            <person name="Pavan W.J."/>
            <person name="Pavesi G."/>
            <person name="Pesole G."/>
            <person name="Petrovsky N."/>
            <person name="Piazza S."/>
            <person name="Reed J."/>
            <person name="Reid J.F."/>
            <person name="Ring B.Z."/>
            <person name="Ringwald M."/>
            <person name="Rost B."/>
            <person name="Ruan Y."/>
            <person name="Salzberg S.L."/>
            <person name="Sandelin A."/>
            <person name="Schneider C."/>
            <person name="Schoenbach C."/>
            <person name="Sekiguchi K."/>
            <person name="Semple C.A."/>
            <person name="Seno S."/>
            <person name="Sessa L."/>
            <person name="Sheng Y."/>
            <person name="Shibata Y."/>
            <person name="Shimada H."/>
            <person name="Shimada K."/>
            <person name="Silva D."/>
            <person name="Sinclair B."/>
            <person name="Sperling S."/>
            <person name="Stupka E."/>
            <person name="Sugiura K."/>
            <person name="Sultana R."/>
            <person name="Takenaka Y."/>
            <person name="Taki K."/>
            <person name="Tammoja K."/>
            <person name="Tan S.L."/>
            <person name="Tang S."/>
            <person name="Taylor M.S."/>
            <person name="Tegner J."/>
            <person name="Teichmann S.A."/>
            <person name="Ueda H.R."/>
            <person name="van Nimwegen E."/>
            <person name="Verardo R."/>
            <person name="Wei C.L."/>
            <person name="Yagi K."/>
            <person name="Yamanishi H."/>
            <person name="Zabarovsky E."/>
            <person name="Zhu S."/>
            <person name="Zimmer A."/>
            <person name="Hide W."/>
            <person name="Bult C."/>
            <person name="Grimmond S.M."/>
            <person name="Teasdale R.D."/>
            <person name="Liu E.T."/>
            <person name="Brusic V."/>
            <person name="Quackenbush J."/>
            <person name="Wahlestedt C."/>
            <person name="Mattick J.S."/>
            <person name="Hume D.A."/>
            <person name="Kai C."/>
            <person name="Sasaki D."/>
            <person name="Tomaru Y."/>
            <person name="Fukuda S."/>
            <person name="Kanamori-Katayama M."/>
            <person name="Suzuki M."/>
            <person name="Aoki J."/>
            <person name="Arakawa T."/>
            <person name="Iida J."/>
            <person name="Imamura K."/>
            <person name="Itoh M."/>
            <person name="Kato T."/>
            <person name="Kawaji H."/>
            <person name="Kawagashira N."/>
            <person name="Kawashima T."/>
            <person name="Kojima M."/>
            <person name="Kondo S."/>
            <person name="Konno H."/>
            <person name="Nakano K."/>
            <person name="Ninomiya N."/>
            <person name="Nishio T."/>
            <person name="Okada M."/>
            <person name="Plessy C."/>
            <person name="Shibata K."/>
            <person name="Shiraki T."/>
            <person name="Suzuki S."/>
            <person name="Tagami M."/>
            <person name="Waki K."/>
            <person name="Watahiki A."/>
            <person name="Okamura-Oho Y."/>
            <person name="Suzuki H."/>
            <person name="Kawai J."/>
            <person name="Hayashizaki Y."/>
        </authorList>
    </citation>
    <scope>NUCLEOTIDE SEQUENCE [LARGE SCALE MRNA]</scope>
    <source>
        <strain>C57BL/6J</strain>
        <tissue>Cerebellum</tissue>
        <tissue>Embryo</tissue>
        <tissue>Liver</tissue>
        <tissue>Skin</tissue>
    </source>
</reference>
<reference key="2">
    <citation type="journal article" date="2004" name="Genome Res.">
        <title>The status, quality, and expansion of the NIH full-length cDNA project: the Mammalian Gene Collection (MGC).</title>
        <authorList>
            <consortium name="The MGC Project Team"/>
        </authorList>
    </citation>
    <scope>NUCLEOTIDE SEQUENCE [LARGE SCALE MRNA]</scope>
</reference>
<reference key="3">
    <citation type="submission" date="1996-10" db="EMBL/GenBank/DDBJ databases">
        <authorList>
            <person name="Crozet F."/>
        </authorList>
    </citation>
    <scope>PRELIMINARY PARTIAL NUCLEOTIDE SEQUENCE</scope>
    <source>
        <strain>BALB/cJ</strain>
        <tissue>Cochlea</tissue>
    </source>
</reference>
<reference key="4">
    <citation type="journal article" date="2006" name="Mol. Cell. Biol.">
        <title>Loss of the mouse ortholog of the shwachman-diamond syndrome gene (Sbds) results in early embryonic lethality.</title>
        <authorList>
            <person name="Zhang S."/>
            <person name="Shi M."/>
            <person name="Hui C.C."/>
            <person name="Rommens J.M."/>
        </authorList>
    </citation>
    <scope>DISRUPTION PHENOTYPE</scope>
    <scope>TISSUE SPECIFICITY</scope>
</reference>
<reference key="5">
    <citation type="journal article" date="2009" name="Hum. Mol. Genet.">
        <title>Shwachman-Bodian Diamond syndrome is a multi-functional protein implicated in cellular stress responses.</title>
        <authorList>
            <person name="Ball H.L."/>
            <person name="Zhang B."/>
            <person name="Riches J.J."/>
            <person name="Gandhi R."/>
            <person name="Li J."/>
            <person name="Rommens J.M."/>
            <person name="Myers J.S."/>
        </authorList>
    </citation>
    <scope>FUNCTION</scope>
    <scope>SUBCELLULAR LOCATION</scope>
</reference>
<reference key="6">
    <citation type="journal article" date="2010" name="Cell">
        <title>A tissue-specific atlas of mouse protein phosphorylation and expression.</title>
        <authorList>
            <person name="Huttlin E.L."/>
            <person name="Jedrychowski M.P."/>
            <person name="Elias J.E."/>
            <person name="Goswami T."/>
            <person name="Rad R."/>
            <person name="Beausoleil S.A."/>
            <person name="Villen J."/>
            <person name="Haas W."/>
            <person name="Sowa M.E."/>
            <person name="Gygi S.P."/>
        </authorList>
    </citation>
    <scope>PHOSPHORYLATION [LARGE SCALE ANALYSIS] AT SER-238</scope>
    <scope>IDENTIFICATION BY MASS SPECTROMETRY [LARGE SCALE ANALYSIS]</scope>
    <source>
        <tissue>Brain</tissue>
        <tissue>Brown adipose tissue</tissue>
        <tissue>Heart</tissue>
        <tissue>Kidney</tissue>
        <tissue>Liver</tissue>
        <tissue>Lung</tissue>
        <tissue>Pancreas</tissue>
        <tissue>Spleen</tissue>
        <tissue>Testis</tissue>
    </source>
</reference>
<reference key="7">
    <citation type="journal article" date="2011" name="Genes Dev.">
        <title>Uncoupling of GTP hydrolysis from eIF6 release on the ribosome causes Shwachman-Diamond syndrome.</title>
        <authorList>
            <person name="Finch A.J."/>
            <person name="Hilcenko C."/>
            <person name="Basse N."/>
            <person name="Drynan L.F."/>
            <person name="Goyenechea B."/>
            <person name="Menne T.F."/>
            <person name="Gonzalez Fernandez A."/>
            <person name="Simpson P."/>
            <person name="D'Santos C.S."/>
            <person name="Arends M.J."/>
            <person name="Donadieu J."/>
            <person name="Bellanne-Chantelot C."/>
            <person name="Costanzo M."/>
            <person name="Boone C."/>
            <person name="McKenzie A.N."/>
            <person name="Freund S.M."/>
            <person name="Warren A.J."/>
        </authorList>
    </citation>
    <scope>DISRUPTION PHENOTYPE</scope>
    <scope>FUNCTION</scope>
    <scope>SUBCELLULAR LOCATION</scope>
</reference>
<feature type="initiator methionine" description="Removed" evidence="2">
    <location>
        <position position="1"/>
    </location>
</feature>
<feature type="chain" id="PRO_0000123763" description="Ribosome maturation protein SBDS">
    <location>
        <begin position="2"/>
        <end position="250"/>
    </location>
</feature>
<feature type="modified residue" description="N-acetylserine" evidence="2">
    <location>
        <position position="2"/>
    </location>
</feature>
<feature type="modified residue" description="Phosphoserine" evidence="7">
    <location>
        <position position="238"/>
    </location>
</feature>